<evidence type="ECO:0000250" key="1"/>
<evidence type="ECO:0000255" key="2">
    <source>
        <dbReference type="HAMAP-Rule" id="MF_00138"/>
    </source>
</evidence>
<reference key="1">
    <citation type="journal article" date="2004" name="Mol. Plant Microbe Interact.">
        <title>The genome sequence of the Gram-positive sugarcane pathogen Leifsonia xyli subsp. xyli.</title>
        <authorList>
            <person name="Monteiro-Vitorello C.B."/>
            <person name="Camargo L.E.A."/>
            <person name="Van Sluys M.A."/>
            <person name="Kitajima J.P."/>
            <person name="Truffi D."/>
            <person name="do Amaral A.M."/>
            <person name="Harakava R."/>
            <person name="de Oliveira J.C.F."/>
            <person name="Wood D."/>
            <person name="de Oliveira M.C."/>
            <person name="Miyaki C.Y."/>
            <person name="Takita M.A."/>
            <person name="da Silva A.C.R."/>
            <person name="Furlan L.R."/>
            <person name="Carraro D.M."/>
            <person name="Camarotte G."/>
            <person name="Almeida N.F. Jr."/>
            <person name="Carrer H."/>
            <person name="Coutinho L.L."/>
            <person name="El-Dorry H.A."/>
            <person name="Ferro M.I.T."/>
            <person name="Gagliardi P.R."/>
            <person name="Giglioti E."/>
            <person name="Goldman M.H.S."/>
            <person name="Goldman G.H."/>
            <person name="Kimura E.T."/>
            <person name="Ferro E.S."/>
            <person name="Kuramae E.E."/>
            <person name="Lemos E.G.M."/>
            <person name="Lemos M.V.F."/>
            <person name="Mauro S.M.Z."/>
            <person name="Machado M.A."/>
            <person name="Marino C.L."/>
            <person name="Menck C.F."/>
            <person name="Nunes L.R."/>
            <person name="Oliveira R.C."/>
            <person name="Pereira G.G."/>
            <person name="Siqueira W."/>
            <person name="de Souza A.A."/>
            <person name="Tsai S.M."/>
            <person name="Zanca A.S."/>
            <person name="Simpson A.J.G."/>
            <person name="Brumbley S.M."/>
            <person name="Setubal J.C."/>
        </authorList>
    </citation>
    <scope>NUCLEOTIDE SEQUENCE [LARGE SCALE GENOMIC DNA]</scope>
    <source>
        <strain>CTCB07</strain>
    </source>
</reference>
<gene>
    <name evidence="2" type="primary">purD</name>
    <name type="ordered locus">Lxx22780</name>
</gene>
<name>PUR2_LEIXX</name>
<keyword id="KW-0067">ATP-binding</keyword>
<keyword id="KW-0436">Ligase</keyword>
<keyword id="KW-0460">Magnesium</keyword>
<keyword id="KW-0464">Manganese</keyword>
<keyword id="KW-0479">Metal-binding</keyword>
<keyword id="KW-0547">Nucleotide-binding</keyword>
<keyword id="KW-0658">Purine biosynthesis</keyword>
<keyword id="KW-1185">Reference proteome</keyword>
<protein>
    <recommendedName>
        <fullName evidence="2">Phosphoribosylamine--glycine ligase</fullName>
        <ecNumber evidence="2">6.3.4.13</ecNumber>
    </recommendedName>
    <alternativeName>
        <fullName evidence="2">GARS</fullName>
    </alternativeName>
    <alternativeName>
        <fullName evidence="2">Glycinamide ribonucleotide synthetase</fullName>
    </alternativeName>
    <alternativeName>
        <fullName evidence="2">Phosphoribosylglycinamide synthetase</fullName>
    </alternativeName>
</protein>
<dbReference type="EC" id="6.3.4.13" evidence="2"/>
<dbReference type="EMBL" id="AE016822">
    <property type="protein sequence ID" value="AAT89947.1"/>
    <property type="molecule type" value="Genomic_DNA"/>
</dbReference>
<dbReference type="RefSeq" id="WP_011186926.1">
    <property type="nucleotide sequence ID" value="NC_006087.1"/>
</dbReference>
<dbReference type="SMR" id="Q6ACE6"/>
<dbReference type="STRING" id="281090.Lxx22780"/>
<dbReference type="KEGG" id="lxx:Lxx22780"/>
<dbReference type="eggNOG" id="COG0151">
    <property type="taxonomic scope" value="Bacteria"/>
</dbReference>
<dbReference type="HOGENOM" id="CLU_027420_3_1_11"/>
<dbReference type="UniPathway" id="UPA00074">
    <property type="reaction ID" value="UER00125"/>
</dbReference>
<dbReference type="Proteomes" id="UP000001306">
    <property type="component" value="Chromosome"/>
</dbReference>
<dbReference type="GO" id="GO:0005524">
    <property type="term" value="F:ATP binding"/>
    <property type="evidence" value="ECO:0007669"/>
    <property type="project" value="UniProtKB-KW"/>
</dbReference>
<dbReference type="GO" id="GO:0046872">
    <property type="term" value="F:metal ion binding"/>
    <property type="evidence" value="ECO:0007669"/>
    <property type="project" value="UniProtKB-KW"/>
</dbReference>
<dbReference type="GO" id="GO:0004637">
    <property type="term" value="F:phosphoribosylamine-glycine ligase activity"/>
    <property type="evidence" value="ECO:0007669"/>
    <property type="project" value="UniProtKB-UniRule"/>
</dbReference>
<dbReference type="GO" id="GO:0006189">
    <property type="term" value="P:'de novo' IMP biosynthetic process"/>
    <property type="evidence" value="ECO:0007669"/>
    <property type="project" value="UniProtKB-UniRule"/>
</dbReference>
<dbReference type="GO" id="GO:0009113">
    <property type="term" value="P:purine nucleobase biosynthetic process"/>
    <property type="evidence" value="ECO:0007669"/>
    <property type="project" value="InterPro"/>
</dbReference>
<dbReference type="Gene3D" id="3.40.50.20">
    <property type="match status" value="1"/>
</dbReference>
<dbReference type="Gene3D" id="3.30.1490.20">
    <property type="entry name" value="ATP-grasp fold, A domain"/>
    <property type="match status" value="1"/>
</dbReference>
<dbReference type="Gene3D" id="3.30.470.20">
    <property type="entry name" value="ATP-grasp fold, B domain"/>
    <property type="match status" value="1"/>
</dbReference>
<dbReference type="Gene3D" id="3.90.600.10">
    <property type="entry name" value="Phosphoribosylglycinamide synthetase, C-terminal domain"/>
    <property type="match status" value="1"/>
</dbReference>
<dbReference type="HAMAP" id="MF_00138">
    <property type="entry name" value="GARS"/>
    <property type="match status" value="1"/>
</dbReference>
<dbReference type="InterPro" id="IPR011761">
    <property type="entry name" value="ATP-grasp"/>
</dbReference>
<dbReference type="InterPro" id="IPR013815">
    <property type="entry name" value="ATP_grasp_subdomain_1"/>
</dbReference>
<dbReference type="InterPro" id="IPR016185">
    <property type="entry name" value="PreATP-grasp_dom_sf"/>
</dbReference>
<dbReference type="InterPro" id="IPR020561">
    <property type="entry name" value="PRibGlycinamid_synth_ATP-grasp"/>
</dbReference>
<dbReference type="InterPro" id="IPR000115">
    <property type="entry name" value="PRibGlycinamide_synth"/>
</dbReference>
<dbReference type="InterPro" id="IPR020560">
    <property type="entry name" value="PRibGlycinamide_synth_C-dom"/>
</dbReference>
<dbReference type="InterPro" id="IPR037123">
    <property type="entry name" value="PRibGlycinamide_synth_C_sf"/>
</dbReference>
<dbReference type="InterPro" id="IPR020559">
    <property type="entry name" value="PRibGlycinamide_synth_CS"/>
</dbReference>
<dbReference type="InterPro" id="IPR020562">
    <property type="entry name" value="PRibGlycinamide_synth_N"/>
</dbReference>
<dbReference type="InterPro" id="IPR011054">
    <property type="entry name" value="Rudment_hybrid_motif"/>
</dbReference>
<dbReference type="NCBIfam" id="TIGR00877">
    <property type="entry name" value="purD"/>
    <property type="match status" value="1"/>
</dbReference>
<dbReference type="PANTHER" id="PTHR43472">
    <property type="entry name" value="PHOSPHORIBOSYLAMINE--GLYCINE LIGASE"/>
    <property type="match status" value="1"/>
</dbReference>
<dbReference type="PANTHER" id="PTHR43472:SF1">
    <property type="entry name" value="PHOSPHORIBOSYLAMINE--GLYCINE LIGASE, CHLOROPLASTIC"/>
    <property type="match status" value="1"/>
</dbReference>
<dbReference type="Pfam" id="PF01071">
    <property type="entry name" value="GARS_A"/>
    <property type="match status" value="1"/>
</dbReference>
<dbReference type="Pfam" id="PF02843">
    <property type="entry name" value="GARS_C"/>
    <property type="match status" value="1"/>
</dbReference>
<dbReference type="Pfam" id="PF02844">
    <property type="entry name" value="GARS_N"/>
    <property type="match status" value="1"/>
</dbReference>
<dbReference type="SMART" id="SM01209">
    <property type="entry name" value="GARS_A"/>
    <property type="match status" value="1"/>
</dbReference>
<dbReference type="SMART" id="SM01210">
    <property type="entry name" value="GARS_C"/>
    <property type="match status" value="1"/>
</dbReference>
<dbReference type="SUPFAM" id="SSF56059">
    <property type="entry name" value="Glutathione synthetase ATP-binding domain-like"/>
    <property type="match status" value="1"/>
</dbReference>
<dbReference type="SUPFAM" id="SSF52440">
    <property type="entry name" value="PreATP-grasp domain"/>
    <property type="match status" value="1"/>
</dbReference>
<dbReference type="SUPFAM" id="SSF51246">
    <property type="entry name" value="Rudiment single hybrid motif"/>
    <property type="match status" value="1"/>
</dbReference>
<dbReference type="PROSITE" id="PS50975">
    <property type="entry name" value="ATP_GRASP"/>
    <property type="match status" value="1"/>
</dbReference>
<dbReference type="PROSITE" id="PS00184">
    <property type="entry name" value="GARS"/>
    <property type="match status" value="1"/>
</dbReference>
<sequence length="417" mass="43135">MKILVLGSGAREHAIITALLAERAGHDIVAAPGNAGIAADVAVEPGLDTLNGAAVTAFAIENGFELVVIGPEAPLVAGVADPLRRRGIPVFGPGRAAAQLEGSKTFAKRIMDEAGVPTGRAVRAATLAEAGSALDEFGAPYVVKADGLAAGKGVIVTEDRAAALAHAARYLTHGSVLVEEFLDGEEVSLFLVSDGHTVLPLSPAQDYKRLLDGDAGPNTGGMGAYSPLTWLPETFVDEVIDTVAMPTVRQLAAEQTPFIGLLYCGLIVTAKGIRVIEFNARFGDPETQVVLPRLVTPLSTLLFAAATGTLSGMPRPEFAPGTTVTVVLASEDYPESPRTGRPIAGLDEAASVPEVTIAHASTARDETTGALLATGGRVLSVVARGATFADARTRAYDALSRIRLDGSQYRTDIAARA</sequence>
<comment type="catalytic activity">
    <reaction evidence="2">
        <text>5-phospho-beta-D-ribosylamine + glycine + ATP = N(1)-(5-phospho-beta-D-ribosyl)glycinamide + ADP + phosphate + H(+)</text>
        <dbReference type="Rhea" id="RHEA:17453"/>
        <dbReference type="ChEBI" id="CHEBI:15378"/>
        <dbReference type="ChEBI" id="CHEBI:30616"/>
        <dbReference type="ChEBI" id="CHEBI:43474"/>
        <dbReference type="ChEBI" id="CHEBI:57305"/>
        <dbReference type="ChEBI" id="CHEBI:58681"/>
        <dbReference type="ChEBI" id="CHEBI:143788"/>
        <dbReference type="ChEBI" id="CHEBI:456216"/>
        <dbReference type="EC" id="6.3.4.13"/>
    </reaction>
</comment>
<comment type="cofactor">
    <cofactor evidence="1">
        <name>Mg(2+)</name>
        <dbReference type="ChEBI" id="CHEBI:18420"/>
    </cofactor>
    <cofactor evidence="1">
        <name>Mn(2+)</name>
        <dbReference type="ChEBI" id="CHEBI:29035"/>
    </cofactor>
    <text evidence="1">Binds 1 Mg(2+) or Mn(2+) ion per subunit.</text>
</comment>
<comment type="pathway">
    <text evidence="2">Purine metabolism; IMP biosynthesis via de novo pathway; N(1)-(5-phospho-D-ribosyl)glycinamide from 5-phospho-alpha-D-ribose 1-diphosphate: step 2/2.</text>
</comment>
<comment type="similarity">
    <text evidence="2">Belongs to the GARS family.</text>
</comment>
<feature type="chain" id="PRO_0000151457" description="Phosphoribosylamine--glycine ligase">
    <location>
        <begin position="1"/>
        <end position="417"/>
    </location>
</feature>
<feature type="domain" description="ATP-grasp" evidence="2">
    <location>
        <begin position="108"/>
        <end position="307"/>
    </location>
</feature>
<feature type="binding site" evidence="2">
    <location>
        <begin position="134"/>
        <end position="188"/>
    </location>
    <ligand>
        <name>ATP</name>
        <dbReference type="ChEBI" id="CHEBI:30616"/>
    </ligand>
</feature>
<feature type="binding site" evidence="2">
    <location>
        <position position="277"/>
    </location>
    <ligand>
        <name>Mg(2+)</name>
        <dbReference type="ChEBI" id="CHEBI:18420"/>
    </ligand>
</feature>
<feature type="binding site" evidence="2">
    <location>
        <position position="279"/>
    </location>
    <ligand>
        <name>Mg(2+)</name>
        <dbReference type="ChEBI" id="CHEBI:18420"/>
    </ligand>
</feature>
<proteinExistence type="inferred from homology"/>
<accession>Q6ACE6</accession>
<organism>
    <name type="scientific">Leifsonia xyli subsp. xyli (strain CTCB07)</name>
    <dbReference type="NCBI Taxonomy" id="281090"/>
    <lineage>
        <taxon>Bacteria</taxon>
        <taxon>Bacillati</taxon>
        <taxon>Actinomycetota</taxon>
        <taxon>Actinomycetes</taxon>
        <taxon>Micrococcales</taxon>
        <taxon>Microbacteriaceae</taxon>
        <taxon>Leifsonia</taxon>
    </lineage>
</organism>